<name>MFMH_ANNMO</name>
<dbReference type="EC" id="4.2.3.-" evidence="3"/>
<dbReference type="EMBL" id="MU403194">
    <property type="protein sequence ID" value="KAI1452419.1"/>
    <property type="molecule type" value="Genomic_DNA"/>
</dbReference>
<dbReference type="UniPathway" id="UPA00213"/>
<dbReference type="InterPro" id="IPR039020">
    <property type="entry name" value="PaxB-like"/>
</dbReference>
<dbReference type="PANTHER" id="PTHR42038">
    <property type="match status" value="1"/>
</dbReference>
<dbReference type="PANTHER" id="PTHR42038:SF2">
    <property type="entry name" value="TERPENE CYCLASE AUSL"/>
    <property type="match status" value="1"/>
</dbReference>
<dbReference type="Pfam" id="PF25129">
    <property type="entry name" value="Pyr4-TMTC"/>
    <property type="match status" value="1"/>
</dbReference>
<accession>P0DY23</accession>
<reference key="1">
    <citation type="journal article" date="2022" name="New Phytol.">
        <title>Ecological generalism drives hyperdiversity of secondary metabolite gene clusters in xylarialean endophytes.</title>
        <authorList>
            <person name="Franco M.E.E."/>
            <person name="Wisecaver J.H."/>
            <person name="Arnold A.E."/>
            <person name="Ju Y.M."/>
            <person name="Slot J.C."/>
            <person name="Ahrendt S."/>
            <person name="Moore L.P."/>
            <person name="Eastman K.E."/>
            <person name="Scott K."/>
            <person name="Konkel Z."/>
            <person name="Mondo S.J."/>
            <person name="Kuo A."/>
            <person name="Hayes R.D."/>
            <person name="Haridas S."/>
            <person name="Andreopoulos B."/>
            <person name="Riley R."/>
            <person name="LaButti K."/>
            <person name="Pangilinan J."/>
            <person name="Lipzen A."/>
            <person name="Amirebrahimi M."/>
            <person name="Yan J."/>
            <person name="Adam C."/>
            <person name="Keymanesh K."/>
            <person name="Ng V."/>
            <person name="Louie K."/>
            <person name="Northen T."/>
            <person name="Drula E."/>
            <person name="Henrissat B."/>
            <person name="Hsieh H.M."/>
            <person name="Youens-Clark K."/>
            <person name="Lutzoni F."/>
            <person name="Miadlikowska J."/>
            <person name="Eastwood D.C."/>
            <person name="Hamelin R.C."/>
            <person name="Grigoriev I.V."/>
            <person name="U'Ren J.M."/>
        </authorList>
    </citation>
    <scope>NUCLEOTIDE SEQUENCE [GENOMIC DNA]</scope>
    <source>
        <strain>CBS 123579</strain>
    </source>
</reference>
<reference key="2">
    <citation type="journal article" date="2024" name="Chem. Sci.">
        <title>Global genome mining-driven discovery of an unusual biosynthetic logic for fungal polyketide-terpenoid hybrids.</title>
        <authorList>
            <person name="Yan D."/>
            <person name="Matsuda Y."/>
        </authorList>
    </citation>
    <scope>FUNCTION</scope>
    <scope>CATALYTIC ACTIVITY</scope>
    <scope>PATHWAY</scope>
    <source>
        <strain>CBS 123579</strain>
    </source>
</reference>
<evidence type="ECO:0000255" key="1"/>
<evidence type="ECO:0000255" key="2">
    <source>
        <dbReference type="PROSITE-ProRule" id="PRU00498"/>
    </source>
</evidence>
<evidence type="ECO:0000269" key="3">
    <source>
    </source>
</evidence>
<evidence type="ECO:0000303" key="4">
    <source>
    </source>
</evidence>
<evidence type="ECO:0000305" key="5"/>
<keyword id="KW-0325">Glycoprotein</keyword>
<keyword id="KW-0456">Lyase</keyword>
<keyword id="KW-0472">Membrane</keyword>
<keyword id="KW-0812">Transmembrane</keyword>
<keyword id="KW-1133">Transmembrane helix</keyword>
<feature type="chain" id="PRO_0000461997" description="Pyr4-family terpene cyclase mfmH">
    <location>
        <begin position="1"/>
        <end position="242"/>
    </location>
</feature>
<feature type="transmembrane region" description="Helical" evidence="1">
    <location>
        <begin position="25"/>
        <end position="45"/>
    </location>
</feature>
<feature type="transmembrane region" description="Helical" evidence="1">
    <location>
        <begin position="55"/>
        <end position="75"/>
    </location>
</feature>
<feature type="transmembrane region" description="Helical" evidence="1">
    <location>
        <begin position="80"/>
        <end position="100"/>
    </location>
</feature>
<feature type="transmembrane region" description="Helical" evidence="1">
    <location>
        <begin position="116"/>
        <end position="136"/>
    </location>
</feature>
<feature type="transmembrane region" description="Helical" evidence="1">
    <location>
        <begin position="175"/>
        <end position="195"/>
    </location>
</feature>
<feature type="transmembrane region" description="Helical" evidence="1">
    <location>
        <begin position="211"/>
        <end position="231"/>
    </location>
</feature>
<feature type="glycosylation site" description="N-linked (GlcNAc...) asparagine" evidence="2">
    <location>
        <position position="170"/>
    </location>
</feature>
<sequence>MFSNLHLPLNPIDKVNQPPVYYLQVQDGLIICSGLCWTTAYILYIRQAYRDKSYGMPLVCLCANIAWEFLFGAAIPESAAQVVSFFPWFVIDIGIVYTTWKFGREQWKHAPLVAQNLGWILLGGIAGMLVMFWAFLKTYDNRYEAGFYLAWTDQIIVSTTSVAQLMSRNNTSGHSWGIWFTRWIGSVFAELIFVWRYWNYPESYPVAATHVTIFLFIVTEVADLTYPFVYASLDKKEKKKLK</sequence>
<proteinExistence type="evidence at protein level"/>
<organism>
    <name type="scientific">Annulohypoxylon moriforme</name>
    <name type="common">Filamentous fungus</name>
    <name type="synonym">Hypoxylon moriforme</name>
    <dbReference type="NCBI Taxonomy" id="326622"/>
    <lineage>
        <taxon>Eukaryota</taxon>
        <taxon>Fungi</taxon>
        <taxon>Dikarya</taxon>
        <taxon>Ascomycota</taxon>
        <taxon>Pezizomycotina</taxon>
        <taxon>Sordariomycetes</taxon>
        <taxon>Xylariomycetidae</taxon>
        <taxon>Xylariales</taxon>
        <taxon>Hypoxylaceae</taxon>
        <taxon>Annulohypoxylon</taxon>
    </lineage>
</organism>
<comment type="function">
    <text evidence="3">Terpene cyclase; part of the gene cluster that mediates the biosynthesis of the phthalide-terpenoid hybrid 11'-O-desmethylfendlerol (PubMed:38404388). Within the pathway, mfmH catalyzes the last step and cyclizes the prenyl unit of 5-O-farnesylcyclopolic acid into a drimane-like structure to yield 11'-O-desmethylfendlerol (PubMed:38404388). The biosynthesis of 11'-O-desmethylfendlerol begins with the NR-PKS mfmB that forms 3,5-dimethylorsellinic acid (DMOA), which is then transformed into the phthalide 5,7-dihydroxy-4-(hydroxymethyl)-6-methylphthalide by the cytochrome P450 monooxygenase mfmA and the hydrolase mfmC. Subsequently, the methyltransferase mfmE catalyzes 7-O-methylation to yield 5-hydroxy-4-(hydroxymethyl)-7-methoxy-6-methylphthalide, which undergoes C-3 hydroxylation by the cytochrome P450 monooxygenase mfmF. The resultant cyclopolic acid (2,5-dihydroxy-4-(hydroxymethyl)-7-methoxy-6-methylphthalide) is then farnesylated by the DMATS-type prenyltransferase mfmD to afford 5-O-farnesylcyclopolic acid. Finally, the Pyr4-family terpene cyclase mfmH cyclizes the farnesyl moiety of 5-O-farnesylcyclopolic acid into a drimane-like structure, thus completing the biosynthesis of 11'-O-desmethylfendlerol (PubMed:38404388).</text>
</comment>
<comment type="pathway">
    <text evidence="3">Secondary metabolite biosynthesis; terpenoid biosynthesis.</text>
</comment>
<comment type="subcellular location">
    <subcellularLocation>
        <location evidence="1">Membrane</location>
        <topology evidence="1">Multi-pass membrane protein</topology>
    </subcellularLocation>
</comment>
<comment type="similarity">
    <text evidence="5">Belongs to the paxB family.</text>
</comment>
<gene>
    <name evidence="4" type="primary">mfmH</name>
    <name type="ORF">F4805DRAFT_30178</name>
</gene>
<protein>
    <recommendedName>
        <fullName evidence="4">Pyr4-family terpene cyclase mfmH</fullName>
        <ecNumber evidence="3">4.2.3.-</ecNumber>
    </recommendedName>
    <alternativeName>
        <fullName evidence="4">11'-O-desmethylfendlerol biosynthesis cluster protein H</fullName>
    </alternativeName>
</protein>